<proteinExistence type="evidence at transcript level"/>
<accession>Q5RE06</accession>
<organism>
    <name type="scientific">Pongo abelii</name>
    <name type="common">Sumatran orangutan</name>
    <name type="synonym">Pongo pygmaeus abelii</name>
    <dbReference type="NCBI Taxonomy" id="9601"/>
    <lineage>
        <taxon>Eukaryota</taxon>
        <taxon>Metazoa</taxon>
        <taxon>Chordata</taxon>
        <taxon>Craniata</taxon>
        <taxon>Vertebrata</taxon>
        <taxon>Euteleostomi</taxon>
        <taxon>Mammalia</taxon>
        <taxon>Eutheria</taxon>
        <taxon>Euarchontoglires</taxon>
        <taxon>Primates</taxon>
        <taxon>Haplorrhini</taxon>
        <taxon>Catarrhini</taxon>
        <taxon>Hominidae</taxon>
        <taxon>Pongo</taxon>
    </lineage>
</organism>
<protein>
    <recommendedName>
        <fullName>Ataxin-10</fullName>
    </recommendedName>
    <alternativeName>
        <fullName>Spinocerebellar ataxia type 10 protein homolog</fullName>
    </alternativeName>
</protein>
<dbReference type="EMBL" id="CR857733">
    <property type="protein sequence ID" value="CAH90001.1"/>
    <property type="molecule type" value="mRNA"/>
</dbReference>
<dbReference type="RefSeq" id="NP_001124949.1">
    <property type="nucleotide sequence ID" value="NM_001131477.1"/>
</dbReference>
<dbReference type="FunCoup" id="Q5RE06">
    <property type="interactions" value="1847"/>
</dbReference>
<dbReference type="STRING" id="9601.ENSPPYP00000013323"/>
<dbReference type="GeneID" id="100171821"/>
<dbReference type="KEGG" id="pon:100171821"/>
<dbReference type="CTD" id="25814"/>
<dbReference type="eggNOG" id="KOG2676">
    <property type="taxonomic scope" value="Eukaryota"/>
</dbReference>
<dbReference type="InParanoid" id="Q5RE06"/>
<dbReference type="OrthoDB" id="379794at2759"/>
<dbReference type="Proteomes" id="UP000001595">
    <property type="component" value="Unplaced"/>
</dbReference>
<dbReference type="GO" id="GO:0005814">
    <property type="term" value="C:centriole"/>
    <property type="evidence" value="ECO:0000250"/>
    <property type="project" value="UniProtKB"/>
</dbReference>
<dbReference type="GO" id="GO:0036064">
    <property type="term" value="C:ciliary basal body"/>
    <property type="evidence" value="ECO:0000250"/>
    <property type="project" value="UniProtKB"/>
</dbReference>
<dbReference type="GO" id="GO:0005737">
    <property type="term" value="C:cytoplasm"/>
    <property type="evidence" value="ECO:0000250"/>
    <property type="project" value="UniProtKB"/>
</dbReference>
<dbReference type="GO" id="GO:0005829">
    <property type="term" value="C:cytosol"/>
    <property type="evidence" value="ECO:0007669"/>
    <property type="project" value="TreeGrafter"/>
</dbReference>
<dbReference type="GO" id="GO:0030496">
    <property type="term" value="C:midbody"/>
    <property type="evidence" value="ECO:0000250"/>
    <property type="project" value="UniProtKB"/>
</dbReference>
<dbReference type="GO" id="GO:0048471">
    <property type="term" value="C:perinuclear region of cytoplasm"/>
    <property type="evidence" value="ECO:0000250"/>
    <property type="project" value="UniProtKB"/>
</dbReference>
<dbReference type="GO" id="GO:0051301">
    <property type="term" value="P:cell division"/>
    <property type="evidence" value="ECO:0007669"/>
    <property type="project" value="UniProtKB-KW"/>
</dbReference>
<dbReference type="GO" id="GO:0031175">
    <property type="term" value="P:neuron projection development"/>
    <property type="evidence" value="ECO:0007669"/>
    <property type="project" value="TreeGrafter"/>
</dbReference>
<dbReference type="GO" id="GO:0032465">
    <property type="term" value="P:regulation of cytokinesis"/>
    <property type="evidence" value="ECO:0000250"/>
    <property type="project" value="UniProtKB"/>
</dbReference>
<dbReference type="FunFam" id="1.25.10.10:FF:000390">
    <property type="entry name" value="Ataxin-10"/>
    <property type="match status" value="1"/>
</dbReference>
<dbReference type="FunFam" id="1.25.10.10:FF:000427">
    <property type="entry name" value="Ataxin-10 isoform 1"/>
    <property type="match status" value="1"/>
</dbReference>
<dbReference type="Gene3D" id="1.25.10.10">
    <property type="entry name" value="Leucine-rich Repeat Variant"/>
    <property type="match status" value="2"/>
</dbReference>
<dbReference type="InterPro" id="IPR011989">
    <property type="entry name" value="ARM-like"/>
</dbReference>
<dbReference type="InterPro" id="IPR016024">
    <property type="entry name" value="ARM-type_fold"/>
</dbReference>
<dbReference type="InterPro" id="IPR051374">
    <property type="entry name" value="Ataxin-10/CTR86_families"/>
</dbReference>
<dbReference type="InterPro" id="IPR019156">
    <property type="entry name" value="Ataxin-10_domain"/>
</dbReference>
<dbReference type="PANTHER" id="PTHR13255">
    <property type="entry name" value="ATAXIN-10"/>
    <property type="match status" value="1"/>
</dbReference>
<dbReference type="PANTHER" id="PTHR13255:SF0">
    <property type="entry name" value="ATAXIN-10"/>
    <property type="match status" value="1"/>
</dbReference>
<dbReference type="Pfam" id="PF09759">
    <property type="entry name" value="Atx10homo_assoc"/>
    <property type="match status" value="1"/>
</dbReference>
<dbReference type="SUPFAM" id="SSF48371">
    <property type="entry name" value="ARM repeat"/>
    <property type="match status" value="1"/>
</dbReference>
<reference key="1">
    <citation type="submission" date="2004-11" db="EMBL/GenBank/DDBJ databases">
        <authorList>
            <consortium name="The German cDNA consortium"/>
        </authorList>
    </citation>
    <scope>NUCLEOTIDE SEQUENCE [LARGE SCALE MRNA]</scope>
    <source>
        <tissue>Kidney</tissue>
    </source>
</reference>
<gene>
    <name type="primary">ATXN10</name>
</gene>
<feature type="chain" id="PRO_0000351656" description="Ataxin-10">
    <location>
        <begin position="1"/>
        <end position="476"/>
    </location>
</feature>
<feature type="modified residue" description="Omega-N-methylarginine" evidence="1">
    <location>
        <position position="10"/>
    </location>
</feature>
<feature type="modified residue" description="Phosphoserine" evidence="3">
    <location>
        <position position="13"/>
    </location>
</feature>
<feature type="modified residue" description="Phosphoserine" evidence="3">
    <location>
        <position position="78"/>
    </location>
</feature>
<feature type="modified residue" description="Phosphothreonine" evidence="3">
    <location>
        <position position="83"/>
    </location>
</feature>
<feature type="modified residue" description="Phosphoserine" evidence="3">
    <location>
        <position position="431"/>
    </location>
</feature>
<keyword id="KW-0131">Cell cycle</keyword>
<keyword id="KW-0132">Cell division</keyword>
<keyword id="KW-0966">Cell projection</keyword>
<keyword id="KW-0963">Cytoplasm</keyword>
<keyword id="KW-0206">Cytoskeleton</keyword>
<keyword id="KW-0488">Methylation</keyword>
<keyword id="KW-0597">Phosphoprotein</keyword>
<keyword id="KW-1185">Reference proteome</keyword>
<keyword id="KW-0832">Ubl conjugation</keyword>
<sequence>MAAPRLPPARALSGVMVPAPIQDLEALRALTALFKEQRNRETAPRTIFQRVLDILKKSSHAVELACRDPSQVENLASSLQLITECFRCLRNACIECSVNQNSIRNLDAIGVAVDLILLFRELRVEQESLLTAFRCGLQFLGNIASRNEDSQSIVWVHAFPELFLSCLNHPDKKIVAYSSMILFTSLNHERMKELEENLNIAIDVIDAYQKHPESEWPFLIITDLFLKSPELVQAMFPKLNNQERVTLLDLMIAKITSDEPLTKDDIPVFLRHAELIASTFVDQCKTVLKLASEEPPDDEEALATIRLLDVLCEMTVNTELLGYLQVFPGLLERVIDLLRVIHVAGKETTNIFSNCGCVRAEGDISNVAEGFKSHLIRLIGNLCYKNKDNQDKVNELDGIPLILDNCNISDSNPFLTQWVIYAIRNLTEDNSQNQDLIAKMEEQGLADASLLKKVGFEVEKKGEKLILKSTRDTPKP</sequence>
<evidence type="ECO:0000250" key="1">
    <source>
        <dbReference type="UniProtKB" id="P28658"/>
    </source>
</evidence>
<evidence type="ECO:0000250" key="2">
    <source>
        <dbReference type="UniProtKB" id="Q9ER24"/>
    </source>
</evidence>
<evidence type="ECO:0000250" key="3">
    <source>
        <dbReference type="UniProtKB" id="Q9UBB4"/>
    </source>
</evidence>
<evidence type="ECO:0000305" key="4"/>
<comment type="function">
    <text evidence="1 2 3">May play a role in the regulation of cytokinesis (By similarity). May play a role in signaling by stimulating protein glycosylation. Induces neuritogenesis by activating the Ras-MAP kinase pathway and is necessary for the survival of cerebellar neurons (By similarity). Does not appear to play a major role in ciliogenesis (By similarity).</text>
</comment>
<comment type="subunit">
    <text evidence="2 3">Homooligomer (By similarity). Interacts with GNB2. Interacts with IQCB1 (By similarity). Interacts with OGT (By similarity).</text>
</comment>
<comment type="subcellular location">
    <subcellularLocation>
        <location evidence="3">Cytoplasm</location>
        <location evidence="3">Perinuclear region</location>
    </subcellularLocation>
    <subcellularLocation>
        <location evidence="3">Midbody</location>
    </subcellularLocation>
    <subcellularLocation>
        <location evidence="1">Cytoplasm</location>
        <location evidence="1">Cytoskeleton</location>
        <location evidence="1">Cilium basal body</location>
    </subcellularLocation>
    <subcellularLocation>
        <location evidence="1">Cytoplasm</location>
        <location evidence="1">Cytoskeleton</location>
        <location evidence="1">Microtubule organizing center</location>
        <location evidence="1">Centrosome</location>
        <location evidence="1">Centriole</location>
    </subcellularLocation>
    <text evidence="3">Localizes to the midbody during telophase.</text>
</comment>
<comment type="PTM">
    <text evidence="3">Polyubiquitinated.</text>
</comment>
<comment type="PTM">
    <text evidence="3">Phosphorylation at Ser-13 by AURKB promotes the association of ATXN10 with PLK1. Phosphorylation at Ser-78 and Thr-83 by PLK1 may play a role in the regulation of cytokinesis and may stimulate the proteasome-mediated degradation of ATXN10.</text>
</comment>
<comment type="similarity">
    <text evidence="4">Belongs to the ataxin-10 family.</text>
</comment>
<name>ATX10_PONAB</name>